<sequence length="448" mass="52006">MSNESFPETLENLLSTLQTKQQNAIQSEVIEWLHSFCETFHLKIHCHKQFIPSGEKKRAKIPAQEIQGNTQPSHHVHRVVLSRAQPVKAQESLLTTMCNGLVLDANTWTCLAIPPPAPFQQATRQVQHFYRNNFYEVVPIQDGTLLTIYYWDDPEHGPSWCLASTHGYDVSNYCWIGDKTFAELVYELLQQHSTCDVTLEKNKTRGTRLFFNNLNPDYCYTIGIRHHNLQPLIYDPQNIWAIQSTNLKTLKTVYPEYYGYIGIPGIQSQVPELPQYDLPYLIRSYKTAMNQAKNAIKNGKKDKEYFNYGYLLISRAPAITKSTSNVLLKSPLLVFLQKSVYQKKHNISNSQRLEFIILQNYLMQHFRDHFIALFPQYISYYTKYQNMLNMIIHSIATKDKDHPFAGAVVKKVLEDIENAENIIDHTTIQNYAHQSKYAMLYLSIISHF</sequence>
<evidence type="ECO:0000269" key="1">
    <source>
    </source>
</evidence>
<evidence type="ECO:0000269" key="2">
    <source>
    </source>
</evidence>
<evidence type="ECO:0000303" key="3">
    <source>
    </source>
</evidence>
<evidence type="ECO:0000305" key="4"/>
<accession>Q65153</accession>
<reference key="1">
    <citation type="journal article" date="1995" name="Virology">
        <title>Analysis of the complete nucleotide sequence of African swine fever virus.</title>
        <authorList>
            <person name="Yanez R.J."/>
            <person name="Rodriguez J.M."/>
            <person name="Nogal M.L."/>
            <person name="Yuste L."/>
            <person name="Enriquez C."/>
            <person name="Rodriguez J.F."/>
            <person name="Vinuela E."/>
        </authorList>
    </citation>
    <scope>NUCLEOTIDE SEQUENCE [LARGE SCALE GENOMIC DNA]</scope>
</reference>
<reference key="2">
    <citation type="journal article" date="2013" name="Virus Res.">
        <title>African swine fever virus transcription.</title>
        <authorList>
            <person name="Rodriguez J.M."/>
            <person name="Salas M.L."/>
        </authorList>
    </citation>
    <scope>REVIEW</scope>
</reference>
<reference key="3">
    <citation type="journal article" date="2018" name="J. Virol.">
        <title>A Proteomic Atlas of the African Swine Fever Virus Particle.</title>
        <authorList>
            <person name="Alejo A."/>
            <person name="Matamoros T."/>
            <person name="Guerra M."/>
            <person name="Andres G."/>
        </authorList>
    </citation>
    <scope>SUBCELLULAR LOCATION</scope>
</reference>
<reference key="4">
    <citation type="journal article" date="2020" name="J. Virol.">
        <title>The African Swine Fever Virus Transcriptome.</title>
        <authorList>
            <person name="Cackett G."/>
            <person name="Matelska D."/>
            <person name="Sykora M."/>
            <person name="Portugal R."/>
            <person name="Malecki M."/>
            <person name="Baehler J."/>
            <person name="Dixon L."/>
            <person name="Werner F."/>
        </authorList>
    </citation>
    <scope>INDUCTION</scope>
</reference>
<name>RLIG_ASFB7</name>
<keyword id="KW-0244">Early protein</keyword>
<keyword id="KW-1185">Reference proteome</keyword>
<keyword id="KW-0946">Virion</keyword>
<organismHost>
    <name type="scientific">Ornithodoros</name>
    <name type="common">relapsing fever ticks</name>
    <dbReference type="NCBI Taxonomy" id="6937"/>
</organismHost>
<organismHost>
    <name type="scientific">Sus scrofa</name>
    <name type="common">Pig</name>
    <dbReference type="NCBI Taxonomy" id="9823"/>
</organismHost>
<gene>
    <name type="ordered locus">Ba71V-061</name>
    <name type="ORF">M448R</name>
</gene>
<dbReference type="EMBL" id="U18466">
    <property type="protein sequence ID" value="AAA65291.1"/>
    <property type="molecule type" value="Genomic_DNA"/>
</dbReference>
<dbReference type="RefSeq" id="NP_042755.1">
    <property type="nucleotide sequence ID" value="NC_001659.2"/>
</dbReference>
<dbReference type="SMR" id="Q65153"/>
<dbReference type="GeneID" id="22220291"/>
<dbReference type="KEGG" id="vg:22220291"/>
<dbReference type="Proteomes" id="UP000000624">
    <property type="component" value="Segment"/>
</dbReference>
<dbReference type="GO" id="GO:0044423">
    <property type="term" value="C:virion component"/>
    <property type="evidence" value="ECO:0007669"/>
    <property type="project" value="UniProtKB-KW"/>
</dbReference>
<organism>
    <name type="scientific">African swine fever virus (strain Badajoz 1971 Vero-adapted)</name>
    <name type="common">Ba71V</name>
    <name type="synonym">ASFV</name>
    <dbReference type="NCBI Taxonomy" id="10498"/>
    <lineage>
        <taxon>Viruses</taxon>
        <taxon>Varidnaviria</taxon>
        <taxon>Bamfordvirae</taxon>
        <taxon>Nucleocytoviricota</taxon>
        <taxon>Pokkesviricetes</taxon>
        <taxon>Asfuvirales</taxon>
        <taxon>Asfarviridae</taxon>
        <taxon>Asfivirus</taxon>
        <taxon>African swine fever virus</taxon>
    </lineage>
</organism>
<feature type="chain" id="PRO_0000373690" description="Putative RNA-ligase">
    <location>
        <begin position="1"/>
        <end position="448"/>
    </location>
</feature>
<protein>
    <recommendedName>
        <fullName evidence="3">Putative RNA-ligase</fullName>
        <shortName>pM448R</shortName>
    </recommendedName>
</protein>
<comment type="subcellular location">
    <subcellularLocation>
        <location evidence="1">Virion</location>
    </subcellularLocation>
</comment>
<comment type="induction">
    <text evidence="2">Expressed in the early phase of the viral replicative cycle.</text>
</comment>
<comment type="similarity">
    <text evidence="4">Belongs to the asfivirus M448R family.</text>
</comment>
<proteinExistence type="evidence at transcript level"/>